<keyword id="KW-0002">3D-structure</keyword>
<keyword id="KW-0378">Hydrolase</keyword>
<keyword id="KW-0460">Magnesium</keyword>
<keyword id="KW-0479">Metal-binding</keyword>
<keyword id="KW-0539">Nucleus</keyword>
<keyword id="KW-0597">Phosphoprotein</keyword>
<keyword id="KW-0904">Protein phosphatase</keyword>
<keyword id="KW-1267">Proteomics identification</keyword>
<keyword id="KW-1185">Reference proteome</keyword>
<accession>O14595</accession>
<accession>A8K5H4</accession>
<accession>Q53ZR2</accession>
<accession>Q6NZY3</accession>
<accession>Q9UEX1</accession>
<protein>
    <recommendedName>
        <fullName>Carboxy-terminal domain RNA polymerase II polypeptide A small phosphatase 2</fullName>
        <ecNumber>3.1.3.16</ecNumber>
    </recommendedName>
    <alternativeName>
        <fullName>Nuclear LIM interactor-interacting factor 2</fullName>
        <shortName>NLI-interacting factor 2</shortName>
    </alternativeName>
    <alternativeName>
        <fullName>Protein OS-4</fullName>
    </alternativeName>
    <alternativeName>
        <fullName>Small C-terminal domain phosphatase 2</fullName>
    </alternativeName>
    <alternativeName>
        <fullName>Small CTD phosphatase 2</fullName>
        <shortName>SCP2</shortName>
    </alternativeName>
</protein>
<reference key="1">
    <citation type="journal article" date="1997" name="Oncogene">
        <title>Characterization of a highly conserved gene (OS4) amplified with CDK4 in human sarcomas.</title>
        <authorList>
            <person name="Su Y.A."/>
            <person name="Lee M.M."/>
            <person name="Hutter C.M."/>
            <person name="Meltzer P.S."/>
        </authorList>
    </citation>
    <scope>NUCLEOTIDE SEQUENCE [MRNA]</scope>
</reference>
<reference key="2">
    <citation type="journal article" date="2003" name="J. Biol. Chem.">
        <title>A novel RNA polymerase II C-terminal domain phosphatase that preferentially dephosphorylates serine 5.</title>
        <authorList>
            <person name="Yeo M."/>
            <person name="Lin P.S."/>
            <person name="Dahmus M.E."/>
            <person name="Gill G.N."/>
        </authorList>
    </citation>
    <scope>NUCLEOTIDE SEQUENCE [MRNA]</scope>
    <scope>FUNCTION</scope>
</reference>
<reference key="3">
    <citation type="submission" date="1997-09" db="EMBL/GenBank/DDBJ databases">
        <authorList>
            <person name="Morikane K."/>
            <person name="Hollingsworth M.A."/>
        </authorList>
    </citation>
    <scope>NUCLEOTIDE SEQUENCE [MRNA]</scope>
    <source>
        <tissue>Fetal pancreas</tissue>
    </source>
</reference>
<reference key="4">
    <citation type="journal article" date="2004" name="Nat. Genet.">
        <title>Complete sequencing and characterization of 21,243 full-length human cDNAs.</title>
        <authorList>
            <person name="Ota T."/>
            <person name="Suzuki Y."/>
            <person name="Nishikawa T."/>
            <person name="Otsuki T."/>
            <person name="Sugiyama T."/>
            <person name="Irie R."/>
            <person name="Wakamatsu A."/>
            <person name="Hayashi K."/>
            <person name="Sato H."/>
            <person name="Nagai K."/>
            <person name="Kimura K."/>
            <person name="Makita H."/>
            <person name="Sekine M."/>
            <person name="Obayashi M."/>
            <person name="Nishi T."/>
            <person name="Shibahara T."/>
            <person name="Tanaka T."/>
            <person name="Ishii S."/>
            <person name="Yamamoto J."/>
            <person name="Saito K."/>
            <person name="Kawai Y."/>
            <person name="Isono Y."/>
            <person name="Nakamura Y."/>
            <person name="Nagahari K."/>
            <person name="Murakami K."/>
            <person name="Yasuda T."/>
            <person name="Iwayanagi T."/>
            <person name="Wagatsuma M."/>
            <person name="Shiratori A."/>
            <person name="Sudo H."/>
            <person name="Hosoiri T."/>
            <person name="Kaku Y."/>
            <person name="Kodaira H."/>
            <person name="Kondo H."/>
            <person name="Sugawara M."/>
            <person name="Takahashi M."/>
            <person name="Kanda K."/>
            <person name="Yokoi T."/>
            <person name="Furuya T."/>
            <person name="Kikkawa E."/>
            <person name="Omura Y."/>
            <person name="Abe K."/>
            <person name="Kamihara K."/>
            <person name="Katsuta N."/>
            <person name="Sato K."/>
            <person name="Tanikawa M."/>
            <person name="Yamazaki M."/>
            <person name="Ninomiya K."/>
            <person name="Ishibashi T."/>
            <person name="Yamashita H."/>
            <person name="Murakawa K."/>
            <person name="Fujimori K."/>
            <person name="Tanai H."/>
            <person name="Kimata M."/>
            <person name="Watanabe M."/>
            <person name="Hiraoka S."/>
            <person name="Chiba Y."/>
            <person name="Ishida S."/>
            <person name="Ono Y."/>
            <person name="Takiguchi S."/>
            <person name="Watanabe S."/>
            <person name="Yosida M."/>
            <person name="Hotuta T."/>
            <person name="Kusano J."/>
            <person name="Kanehori K."/>
            <person name="Takahashi-Fujii A."/>
            <person name="Hara H."/>
            <person name="Tanase T.-O."/>
            <person name="Nomura Y."/>
            <person name="Togiya S."/>
            <person name="Komai F."/>
            <person name="Hara R."/>
            <person name="Takeuchi K."/>
            <person name="Arita M."/>
            <person name="Imose N."/>
            <person name="Musashino K."/>
            <person name="Yuuki H."/>
            <person name="Oshima A."/>
            <person name="Sasaki N."/>
            <person name="Aotsuka S."/>
            <person name="Yoshikawa Y."/>
            <person name="Matsunawa H."/>
            <person name="Ichihara T."/>
            <person name="Shiohata N."/>
            <person name="Sano S."/>
            <person name="Moriya S."/>
            <person name="Momiyama H."/>
            <person name="Satoh N."/>
            <person name="Takami S."/>
            <person name="Terashima Y."/>
            <person name="Suzuki O."/>
            <person name="Nakagawa S."/>
            <person name="Senoh A."/>
            <person name="Mizoguchi H."/>
            <person name="Goto Y."/>
            <person name="Shimizu F."/>
            <person name="Wakebe H."/>
            <person name="Hishigaki H."/>
            <person name="Watanabe T."/>
            <person name="Sugiyama A."/>
            <person name="Takemoto M."/>
            <person name="Kawakami B."/>
            <person name="Yamazaki M."/>
            <person name="Watanabe K."/>
            <person name="Kumagai A."/>
            <person name="Itakura S."/>
            <person name="Fukuzumi Y."/>
            <person name="Fujimori Y."/>
            <person name="Komiyama M."/>
            <person name="Tashiro H."/>
            <person name="Tanigami A."/>
            <person name="Fujiwara T."/>
            <person name="Ono T."/>
            <person name="Yamada K."/>
            <person name="Fujii Y."/>
            <person name="Ozaki K."/>
            <person name="Hirao M."/>
            <person name="Ohmori Y."/>
            <person name="Kawabata A."/>
            <person name="Hikiji T."/>
            <person name="Kobatake N."/>
            <person name="Inagaki H."/>
            <person name="Ikema Y."/>
            <person name="Okamoto S."/>
            <person name="Okitani R."/>
            <person name="Kawakami T."/>
            <person name="Noguchi S."/>
            <person name="Itoh T."/>
            <person name="Shigeta K."/>
            <person name="Senba T."/>
            <person name="Matsumura K."/>
            <person name="Nakajima Y."/>
            <person name="Mizuno T."/>
            <person name="Morinaga M."/>
            <person name="Sasaki M."/>
            <person name="Togashi T."/>
            <person name="Oyama M."/>
            <person name="Hata H."/>
            <person name="Watanabe M."/>
            <person name="Komatsu T."/>
            <person name="Mizushima-Sugano J."/>
            <person name="Satoh T."/>
            <person name="Shirai Y."/>
            <person name="Takahashi Y."/>
            <person name="Nakagawa K."/>
            <person name="Okumura K."/>
            <person name="Nagase T."/>
            <person name="Nomura N."/>
            <person name="Kikuchi H."/>
            <person name="Masuho Y."/>
            <person name="Yamashita R."/>
            <person name="Nakai K."/>
            <person name="Yada T."/>
            <person name="Nakamura Y."/>
            <person name="Ohara O."/>
            <person name="Isogai T."/>
            <person name="Sugano S."/>
        </authorList>
    </citation>
    <scope>NUCLEOTIDE SEQUENCE [LARGE SCALE MRNA]</scope>
</reference>
<reference key="5">
    <citation type="submission" date="2005-07" db="EMBL/GenBank/DDBJ databases">
        <authorList>
            <person name="Mural R.J."/>
            <person name="Istrail S."/>
            <person name="Sutton G.G."/>
            <person name="Florea L."/>
            <person name="Halpern A.L."/>
            <person name="Mobarry C.M."/>
            <person name="Lippert R."/>
            <person name="Walenz B."/>
            <person name="Shatkay H."/>
            <person name="Dew I."/>
            <person name="Miller J.R."/>
            <person name="Flanigan M.J."/>
            <person name="Edwards N.J."/>
            <person name="Bolanos R."/>
            <person name="Fasulo D."/>
            <person name="Halldorsson B.V."/>
            <person name="Hannenhalli S."/>
            <person name="Turner R."/>
            <person name="Yooseph S."/>
            <person name="Lu F."/>
            <person name="Nusskern D.R."/>
            <person name="Shue B.C."/>
            <person name="Zheng X.H."/>
            <person name="Zhong F."/>
            <person name="Delcher A.L."/>
            <person name="Huson D.H."/>
            <person name="Kravitz S.A."/>
            <person name="Mouchard L."/>
            <person name="Reinert K."/>
            <person name="Remington K.A."/>
            <person name="Clark A.G."/>
            <person name="Waterman M.S."/>
            <person name="Eichler E.E."/>
            <person name="Adams M.D."/>
            <person name="Hunkapiller M.W."/>
            <person name="Myers E.W."/>
            <person name="Venter J.C."/>
        </authorList>
    </citation>
    <scope>NUCLEOTIDE SEQUENCE [LARGE SCALE GENOMIC DNA]</scope>
</reference>
<reference key="6">
    <citation type="journal article" date="2004" name="Genome Res.">
        <title>The status, quality, and expansion of the NIH full-length cDNA project: the Mammalian Gene Collection (MGC).</title>
        <authorList>
            <consortium name="The MGC Project Team"/>
        </authorList>
    </citation>
    <scope>NUCLEOTIDE SEQUENCE [LARGE SCALE MRNA]</scope>
    <source>
        <tissue>Leukocyte</tissue>
    </source>
</reference>
<reference key="7">
    <citation type="journal article" date="2005" name="Science">
        <title>Small CTD phosphatases function in silencing neuronal gene expression.</title>
        <authorList>
            <person name="Yeo M."/>
            <person name="Lee S.-K."/>
            <person name="Lee B."/>
            <person name="Ruiz E.C."/>
            <person name="Pfaff S.L."/>
            <person name="Gill G.N."/>
        </authorList>
    </citation>
    <scope>FUNCTION</scope>
    <scope>TISSUE SPECIFICITY</scope>
    <scope>INTERACTION WITH REST</scope>
</reference>
<reference key="8">
    <citation type="journal article" date="2013" name="J. Proteome Res.">
        <title>Toward a comprehensive characterization of a human cancer cell phosphoproteome.</title>
        <authorList>
            <person name="Zhou H."/>
            <person name="Di Palma S."/>
            <person name="Preisinger C."/>
            <person name="Peng M."/>
            <person name="Polat A.N."/>
            <person name="Heck A.J."/>
            <person name="Mohammed S."/>
        </authorList>
    </citation>
    <scope>PHOSPHORYLATION [LARGE SCALE ANALYSIS] AT SER-5</scope>
    <scope>IDENTIFICATION BY MASS SPECTROMETRY [LARGE SCALE ANALYSIS]</scope>
    <source>
        <tissue>Cervix carcinoma</tissue>
        <tissue>Erythroleukemia</tissue>
    </source>
</reference>
<reference key="9">
    <citation type="journal article" date="2007" name="J. Struct. Funct. Genomics">
        <title>Structural genomics of protein phosphatases.</title>
        <authorList>
            <person name="Almo S.C."/>
            <person name="Bonanno J.B."/>
            <person name="Sauder J.M."/>
            <person name="Emtage S."/>
            <person name="Dilorenzo T.P."/>
            <person name="Malashkevich V."/>
            <person name="Wasserman S.R."/>
            <person name="Swaminathan S."/>
            <person name="Eswaramoorthy S."/>
            <person name="Agarwal R."/>
            <person name="Kumaran D."/>
            <person name="Madegowda M."/>
            <person name="Ragumani S."/>
            <person name="Patskovsky Y."/>
            <person name="Alvarado J."/>
            <person name="Ramagopal U.A."/>
            <person name="Faber-Barata J."/>
            <person name="Chance M.R."/>
            <person name="Sali A."/>
            <person name="Fiser A."/>
            <person name="Zhang Z.Y."/>
            <person name="Lawrence D.S."/>
            <person name="Burley S.K."/>
        </authorList>
    </citation>
    <scope>X-RAY CRYSTALLOGRAPHY (2.51 ANGSTROMS) OF 87-271 IN COMPLEX WITH MAGNESIUM</scope>
</reference>
<organism>
    <name type="scientific">Homo sapiens</name>
    <name type="common">Human</name>
    <dbReference type="NCBI Taxonomy" id="9606"/>
    <lineage>
        <taxon>Eukaryota</taxon>
        <taxon>Metazoa</taxon>
        <taxon>Chordata</taxon>
        <taxon>Craniata</taxon>
        <taxon>Vertebrata</taxon>
        <taxon>Euteleostomi</taxon>
        <taxon>Mammalia</taxon>
        <taxon>Eutheria</taxon>
        <taxon>Euarchontoglires</taxon>
        <taxon>Primates</taxon>
        <taxon>Haplorrhini</taxon>
        <taxon>Catarrhini</taxon>
        <taxon>Hominidae</taxon>
        <taxon>Homo</taxon>
    </lineage>
</organism>
<proteinExistence type="evidence at protein level"/>
<feature type="chain" id="PRO_0000212574" description="Carboxy-terminal domain RNA polymerase II polypeptide A small phosphatase 2">
    <location>
        <begin position="1"/>
        <end position="271"/>
    </location>
</feature>
<feature type="domain" description="FCP1 homology" evidence="2">
    <location>
        <begin position="97"/>
        <end position="255"/>
    </location>
</feature>
<feature type="active site" description="4-aspartylphosphate intermediate" evidence="1">
    <location>
        <position position="107"/>
    </location>
</feature>
<feature type="active site" description="Proton donor" evidence="1">
    <location>
        <position position="109"/>
    </location>
</feature>
<feature type="binding site" evidence="5">
    <location>
        <position position="107"/>
    </location>
    <ligand>
        <name>Mg(2+)</name>
        <dbReference type="ChEBI" id="CHEBI:18420"/>
    </ligand>
</feature>
<feature type="binding site" evidence="5">
    <location>
        <position position="109"/>
    </location>
    <ligand>
        <name>Mg(2+)</name>
        <dbReference type="ChEBI" id="CHEBI:18420"/>
    </ligand>
</feature>
<feature type="binding site" evidence="5">
    <location>
        <position position="218"/>
    </location>
    <ligand>
        <name>Mg(2+)</name>
        <dbReference type="ChEBI" id="CHEBI:18420"/>
    </ligand>
</feature>
<feature type="site" description="Transition state stabilizer" evidence="1">
    <location>
        <position position="163"/>
    </location>
</feature>
<feature type="site" description="Transition state stabilizer" evidence="1">
    <location>
        <position position="201"/>
    </location>
</feature>
<feature type="modified residue" description="Phosphoserine" evidence="7">
    <location>
        <position position="5"/>
    </location>
</feature>
<feature type="sequence conflict" description="In Ref. 3; AAD09331." evidence="6" ref="3">
    <original>Q</original>
    <variation>H</variation>
    <location>
        <position position="9"/>
    </location>
</feature>
<feature type="turn" evidence="8">
    <location>
        <begin position="96"/>
        <end position="100"/>
    </location>
</feature>
<feature type="strand" evidence="8">
    <location>
        <begin position="103"/>
        <end position="106"/>
    </location>
</feature>
<feature type="turn" evidence="8">
    <location>
        <begin position="110"/>
        <end position="112"/>
    </location>
</feature>
<feature type="strand" evidence="8">
    <location>
        <begin position="113"/>
        <end position="118"/>
    </location>
</feature>
<feature type="strand" evidence="8">
    <location>
        <begin position="124"/>
        <end position="131"/>
    </location>
</feature>
<feature type="strand" evidence="8">
    <location>
        <begin position="134"/>
        <end position="142"/>
    </location>
</feature>
<feature type="helix" evidence="8">
    <location>
        <begin position="146"/>
        <end position="156"/>
    </location>
</feature>
<feature type="strand" evidence="8">
    <location>
        <begin position="157"/>
        <end position="162"/>
    </location>
</feature>
<feature type="helix" evidence="8">
    <location>
        <begin position="167"/>
        <end position="177"/>
    </location>
</feature>
<feature type="strand" evidence="8">
    <location>
        <begin position="183"/>
        <end position="187"/>
    </location>
</feature>
<feature type="helix" evidence="8">
    <location>
        <begin position="189"/>
        <end position="191"/>
    </location>
</feature>
<feature type="strand" evidence="8">
    <location>
        <begin position="192"/>
        <end position="195"/>
    </location>
</feature>
<feature type="strand" evidence="8">
    <location>
        <begin position="198"/>
        <end position="200"/>
    </location>
</feature>
<feature type="helix" evidence="8">
    <location>
        <begin position="203"/>
        <end position="205"/>
    </location>
</feature>
<feature type="strand" evidence="8">
    <location>
        <begin position="206"/>
        <end position="208"/>
    </location>
</feature>
<feature type="helix" evidence="8">
    <location>
        <begin position="210"/>
        <end position="212"/>
    </location>
</feature>
<feature type="strand" evidence="8">
    <location>
        <begin position="213"/>
        <end position="218"/>
    </location>
</feature>
<feature type="helix" evidence="8">
    <location>
        <begin position="220"/>
        <end position="223"/>
    </location>
</feature>
<feature type="helix" evidence="8">
    <location>
        <begin position="227"/>
        <end position="229"/>
    </location>
</feature>
<feature type="strand" evidence="8">
    <location>
        <begin position="230"/>
        <end position="232"/>
    </location>
</feature>
<feature type="helix" evidence="8">
    <location>
        <begin position="244"/>
        <end position="255"/>
    </location>
</feature>
<feature type="helix" evidence="8">
    <location>
        <begin position="261"/>
        <end position="268"/>
    </location>
</feature>
<dbReference type="EC" id="3.1.3.16"/>
<dbReference type="EMBL" id="AF000152">
    <property type="protein sequence ID" value="AAB71816.1"/>
    <property type="status" value="ALT_FRAME"/>
    <property type="molecule type" value="mRNA"/>
</dbReference>
<dbReference type="EMBL" id="AY279531">
    <property type="protein sequence ID" value="AAP34399.1"/>
    <property type="status" value="ALT_FRAME"/>
    <property type="molecule type" value="mRNA"/>
</dbReference>
<dbReference type="EMBL" id="AF022231">
    <property type="protein sequence ID" value="AAD09331.1"/>
    <property type="molecule type" value="mRNA"/>
</dbReference>
<dbReference type="EMBL" id="AK291289">
    <property type="protein sequence ID" value="BAF83978.1"/>
    <property type="molecule type" value="mRNA"/>
</dbReference>
<dbReference type="EMBL" id="CH471054">
    <property type="protein sequence ID" value="EAW97083.1"/>
    <property type="molecule type" value="Genomic_DNA"/>
</dbReference>
<dbReference type="EMBL" id="BC065920">
    <property type="protein sequence ID" value="AAH65920.1"/>
    <property type="molecule type" value="mRNA"/>
</dbReference>
<dbReference type="CCDS" id="CCDS41801.1"/>
<dbReference type="RefSeq" id="NP_005721.3">
    <property type="nucleotide sequence ID" value="NM_005730.3"/>
</dbReference>
<dbReference type="PDB" id="2Q5E">
    <property type="method" value="X-ray"/>
    <property type="resolution" value="2.51 A"/>
    <property type="chains" value="A/B/C/D/E/F/G/H=87-271"/>
</dbReference>
<dbReference type="PDBsum" id="2Q5E"/>
<dbReference type="SMR" id="O14595"/>
<dbReference type="BioGRID" id="115412">
    <property type="interactions" value="67"/>
</dbReference>
<dbReference type="CORUM" id="O14595"/>
<dbReference type="DIP" id="DIP-61245N"/>
<dbReference type="FunCoup" id="O14595">
    <property type="interactions" value="846"/>
</dbReference>
<dbReference type="IntAct" id="O14595">
    <property type="interactions" value="51"/>
</dbReference>
<dbReference type="MINT" id="O14595"/>
<dbReference type="STRING" id="9606.ENSP00000381148"/>
<dbReference type="DEPOD" id="CTDSP2"/>
<dbReference type="iPTMnet" id="O14595"/>
<dbReference type="PhosphoSitePlus" id="O14595"/>
<dbReference type="SwissPalm" id="O14595"/>
<dbReference type="BioMuta" id="CTDSP2"/>
<dbReference type="jPOST" id="O14595"/>
<dbReference type="MassIVE" id="O14595"/>
<dbReference type="PaxDb" id="9606-ENSP00000381148"/>
<dbReference type="PeptideAtlas" id="O14595"/>
<dbReference type="ProteomicsDB" id="48104"/>
<dbReference type="Antibodypedia" id="8503">
    <property type="antibodies" value="299 antibodies from 28 providers"/>
</dbReference>
<dbReference type="DNASU" id="10106"/>
<dbReference type="Ensembl" id="ENST00000398073.7">
    <property type="protein sequence ID" value="ENSP00000381148.2"/>
    <property type="gene ID" value="ENSG00000175215.11"/>
</dbReference>
<dbReference type="GeneID" id="10106"/>
<dbReference type="KEGG" id="hsa:10106"/>
<dbReference type="MANE-Select" id="ENST00000398073.7">
    <property type="protein sequence ID" value="ENSP00000381148.2"/>
    <property type="RefSeq nucleotide sequence ID" value="NM_005730.4"/>
    <property type="RefSeq protein sequence ID" value="NP_005721.3"/>
</dbReference>
<dbReference type="UCSC" id="uc001sqm.4">
    <property type="organism name" value="human"/>
</dbReference>
<dbReference type="AGR" id="HGNC:17077"/>
<dbReference type="CTD" id="10106"/>
<dbReference type="DisGeNET" id="10106"/>
<dbReference type="GeneCards" id="CTDSP2"/>
<dbReference type="HGNC" id="HGNC:17077">
    <property type="gene designation" value="CTDSP2"/>
</dbReference>
<dbReference type="HPA" id="ENSG00000175215">
    <property type="expression patterns" value="Low tissue specificity"/>
</dbReference>
<dbReference type="MIM" id="608711">
    <property type="type" value="gene"/>
</dbReference>
<dbReference type="neXtProt" id="NX_O14595"/>
<dbReference type="OpenTargets" id="ENSG00000175215"/>
<dbReference type="PharmGKB" id="PA128394568"/>
<dbReference type="VEuPathDB" id="HostDB:ENSG00000175215"/>
<dbReference type="eggNOG" id="KOG1605">
    <property type="taxonomic scope" value="Eukaryota"/>
</dbReference>
<dbReference type="GeneTree" id="ENSGT01040000240451"/>
<dbReference type="InParanoid" id="O14595"/>
<dbReference type="OMA" id="ANTIAKX"/>
<dbReference type="OrthoDB" id="277011at2759"/>
<dbReference type="PAN-GO" id="O14595">
    <property type="GO annotations" value="1 GO annotation based on evolutionary models"/>
</dbReference>
<dbReference type="PhylomeDB" id="O14595"/>
<dbReference type="TreeFam" id="TF313556"/>
<dbReference type="PathwayCommons" id="O14595"/>
<dbReference type="Reactome" id="R-HSA-381038">
    <property type="pathway name" value="XBP1(S) activates chaperone genes"/>
</dbReference>
<dbReference type="SignaLink" id="O14595"/>
<dbReference type="SIGNOR" id="O14595"/>
<dbReference type="BioGRID-ORCS" id="10106">
    <property type="hits" value="48 hits in 1176 CRISPR screens"/>
</dbReference>
<dbReference type="ChiTaRS" id="CTDSP2">
    <property type="organism name" value="human"/>
</dbReference>
<dbReference type="EvolutionaryTrace" id="O14595"/>
<dbReference type="GeneWiki" id="CTDSP2"/>
<dbReference type="GenomeRNAi" id="10106"/>
<dbReference type="Pharos" id="O14595">
    <property type="development level" value="Tbio"/>
</dbReference>
<dbReference type="PRO" id="PR:O14595"/>
<dbReference type="Proteomes" id="UP000005640">
    <property type="component" value="Chromosome 12"/>
</dbReference>
<dbReference type="RNAct" id="O14595">
    <property type="molecule type" value="protein"/>
</dbReference>
<dbReference type="Bgee" id="ENSG00000175215">
    <property type="expression patterns" value="Expressed in mucosa of stomach and 211 other cell types or tissues"/>
</dbReference>
<dbReference type="ExpressionAtlas" id="O14595">
    <property type="expression patterns" value="baseline and differential"/>
</dbReference>
<dbReference type="GO" id="GO:0005654">
    <property type="term" value="C:nucleoplasm"/>
    <property type="evidence" value="ECO:0000304"/>
    <property type="project" value="Reactome"/>
</dbReference>
<dbReference type="GO" id="GO:0046872">
    <property type="term" value="F:metal ion binding"/>
    <property type="evidence" value="ECO:0007669"/>
    <property type="project" value="UniProtKB-KW"/>
</dbReference>
<dbReference type="GO" id="GO:0008420">
    <property type="term" value="F:RNA polymerase II CTD heptapeptide repeat phosphatase activity"/>
    <property type="evidence" value="ECO:0000314"/>
    <property type="project" value="UniProtKB"/>
</dbReference>
<dbReference type="GO" id="GO:2000134">
    <property type="term" value="P:negative regulation of G1/S transition of mitotic cell cycle"/>
    <property type="evidence" value="ECO:0007669"/>
    <property type="project" value="Ensembl"/>
</dbReference>
<dbReference type="GO" id="GO:0006470">
    <property type="term" value="P:protein dephosphorylation"/>
    <property type="evidence" value="ECO:0000314"/>
    <property type="project" value="UniProtKB"/>
</dbReference>
<dbReference type="CDD" id="cd07521">
    <property type="entry name" value="HAD_FCP1-like"/>
    <property type="match status" value="1"/>
</dbReference>
<dbReference type="FunFam" id="3.40.50.1000:FF:000013">
    <property type="entry name" value="Carboxy-terminal domain RNA polymerase II polypeptide A small"/>
    <property type="match status" value="1"/>
</dbReference>
<dbReference type="Gene3D" id="3.40.50.1000">
    <property type="entry name" value="HAD superfamily/HAD-like"/>
    <property type="match status" value="1"/>
</dbReference>
<dbReference type="InterPro" id="IPR011948">
    <property type="entry name" value="Dullard_phosphatase"/>
</dbReference>
<dbReference type="InterPro" id="IPR004274">
    <property type="entry name" value="FCP1_dom"/>
</dbReference>
<dbReference type="InterPro" id="IPR036412">
    <property type="entry name" value="HAD-like_sf"/>
</dbReference>
<dbReference type="InterPro" id="IPR023214">
    <property type="entry name" value="HAD_sf"/>
</dbReference>
<dbReference type="InterPro" id="IPR040078">
    <property type="entry name" value="RNA_Pol_CTD_Phosphatase"/>
</dbReference>
<dbReference type="InterPro" id="IPR050365">
    <property type="entry name" value="TIM50"/>
</dbReference>
<dbReference type="NCBIfam" id="TIGR02251">
    <property type="entry name" value="HIF-SF_euk"/>
    <property type="match status" value="1"/>
</dbReference>
<dbReference type="PANTHER" id="PTHR12210">
    <property type="entry name" value="DULLARD PROTEIN PHOSPHATASE"/>
    <property type="match status" value="1"/>
</dbReference>
<dbReference type="Pfam" id="PF03031">
    <property type="entry name" value="NIF"/>
    <property type="match status" value="1"/>
</dbReference>
<dbReference type="SFLD" id="SFLDG01124">
    <property type="entry name" value="C0.1:_RNA_Pol_CTD_Phosphatase"/>
    <property type="match status" value="1"/>
</dbReference>
<dbReference type="SFLD" id="SFLDS00003">
    <property type="entry name" value="Haloacid_Dehalogenase"/>
    <property type="match status" value="1"/>
</dbReference>
<dbReference type="SMART" id="SM00577">
    <property type="entry name" value="CPDc"/>
    <property type="match status" value="1"/>
</dbReference>
<dbReference type="SUPFAM" id="SSF56784">
    <property type="entry name" value="HAD-like"/>
    <property type="match status" value="1"/>
</dbReference>
<dbReference type="PROSITE" id="PS50969">
    <property type="entry name" value="FCP1"/>
    <property type="match status" value="1"/>
</dbReference>
<evidence type="ECO:0000250" key="1"/>
<evidence type="ECO:0000255" key="2">
    <source>
        <dbReference type="PROSITE-ProRule" id="PRU00336"/>
    </source>
</evidence>
<evidence type="ECO:0000269" key="3">
    <source>
    </source>
</evidence>
<evidence type="ECO:0000269" key="4">
    <source>
    </source>
</evidence>
<evidence type="ECO:0000269" key="5">
    <source>
    </source>
</evidence>
<evidence type="ECO:0000305" key="6"/>
<evidence type="ECO:0007744" key="7">
    <source>
    </source>
</evidence>
<evidence type="ECO:0007829" key="8">
    <source>
        <dbReference type="PDB" id="2Q5E"/>
    </source>
</evidence>
<comment type="function">
    <text evidence="3 4">Preferentially catalyzes the dephosphorylation of 'Ser-5' within the tandem 7 residue repeats in the C-terminal domain (CTD) of the largest RNA polymerase II subunit POLR2A. Negatively regulates RNA polymerase II transcription, possibly by controlling the transition from initiation/capping to processive transcript elongation. Recruited by REST to neuronal genes that contain RE-1 elements, leading to neuronal gene silencing in non-neuronal cells. May contribute to the development of sarcomas.</text>
</comment>
<comment type="catalytic activity">
    <reaction>
        <text>O-phospho-L-seryl-[protein] + H2O = L-seryl-[protein] + phosphate</text>
        <dbReference type="Rhea" id="RHEA:20629"/>
        <dbReference type="Rhea" id="RHEA-COMP:9863"/>
        <dbReference type="Rhea" id="RHEA-COMP:11604"/>
        <dbReference type="ChEBI" id="CHEBI:15377"/>
        <dbReference type="ChEBI" id="CHEBI:29999"/>
        <dbReference type="ChEBI" id="CHEBI:43474"/>
        <dbReference type="ChEBI" id="CHEBI:83421"/>
        <dbReference type="EC" id="3.1.3.16"/>
    </reaction>
</comment>
<comment type="catalytic activity">
    <reaction>
        <text>O-phospho-L-threonyl-[protein] + H2O = L-threonyl-[protein] + phosphate</text>
        <dbReference type="Rhea" id="RHEA:47004"/>
        <dbReference type="Rhea" id="RHEA-COMP:11060"/>
        <dbReference type="Rhea" id="RHEA-COMP:11605"/>
        <dbReference type="ChEBI" id="CHEBI:15377"/>
        <dbReference type="ChEBI" id="CHEBI:30013"/>
        <dbReference type="ChEBI" id="CHEBI:43474"/>
        <dbReference type="ChEBI" id="CHEBI:61977"/>
        <dbReference type="EC" id="3.1.3.16"/>
    </reaction>
</comment>
<comment type="cofactor">
    <cofactor>
        <name>Mg(2+)</name>
        <dbReference type="ChEBI" id="CHEBI:18420"/>
    </cofactor>
    <text>Binds 1 Mg(2+) ion per monomer.</text>
</comment>
<comment type="subunit">
    <text evidence="1 4 5">Monomer (By similarity). Interacts with REST.</text>
</comment>
<comment type="interaction">
    <interactant intactId="EBI-2802973">
        <id>O14595</id>
    </interactant>
    <interactant intactId="EBI-608057">
        <id>P10275</id>
        <label>AR</label>
    </interactant>
    <organismsDiffer>false</organismsDiffer>
    <experiments>3</experiments>
</comment>
<comment type="interaction">
    <interactant intactId="EBI-2802973">
        <id>O14595</id>
    </interactant>
    <interactant intactId="EBI-739534">
        <id>Q99618</id>
        <label>CDCA3</label>
    </interactant>
    <organismsDiffer>false</organismsDiffer>
    <experiments>13</experiments>
</comment>
<comment type="interaction">
    <interactant intactId="EBI-2802973">
        <id>O14595</id>
    </interactant>
    <interactant intactId="EBI-11911016">
        <id>P80188</id>
        <label>LCN2</label>
    </interactant>
    <organismsDiffer>false</organismsDiffer>
    <experiments>3</experiments>
</comment>
<comment type="interaction">
    <interactant intactId="EBI-2802973">
        <id>O14595</id>
    </interactant>
    <interactant intactId="EBI-2512055">
        <id>O15049</id>
        <label>N4BP3</label>
    </interactant>
    <organismsDiffer>false</organismsDiffer>
    <experiments>3</experiments>
</comment>
<comment type="interaction">
    <interactant intactId="EBI-2802973">
        <id>O14595</id>
    </interactant>
    <interactant intactId="EBI-1567153">
        <id>Q15797</id>
        <label>SMAD1</label>
    </interactant>
    <organismsDiffer>false</organismsDiffer>
    <experiments>2</experiments>
</comment>
<comment type="interaction">
    <interactant intactId="EBI-2802973">
        <id>O14595</id>
    </interactant>
    <interactant intactId="EBI-9675698">
        <id>P14079</id>
        <label>tax</label>
    </interactant>
    <organismsDiffer>true</organismsDiffer>
    <experiments>3</experiments>
</comment>
<comment type="subcellular location">
    <subcellularLocation>
        <location evidence="1">Nucleus</location>
    </subcellularLocation>
</comment>
<comment type="tissue specificity">
    <text evidence="4">Expression is restricted to non-neuronal tissues. Highest expression in pancreas and lowest in liver.</text>
</comment>
<comment type="induction">
    <text>In primary sarcomas.</text>
</comment>
<comment type="sequence caution" evidence="6">
    <conflict type="frameshift">
        <sequence resource="EMBL-CDS" id="AAB71816"/>
    </conflict>
</comment>
<comment type="sequence caution" evidence="6">
    <conflict type="frameshift">
        <sequence resource="EMBL-CDS" id="AAP34399"/>
    </conflict>
</comment>
<sequence>MEHGSIITQARREDALVLTKQGLVSKSSPKKPRGRNIFKALFCCFRAQHVGQSSSSTELAAYKEEANTIAKSDLLQCLQYQFYQIPGTCLLPEVTEEDQGRICVVIDLDETLVHSSFKPINNADFIVPIEIEGTTHQVYVLKRPYVDEFLRRMGELFECVLFTASLAKYADPVTDLLDRCGVFRARLFRESCVFHQGCYVKDLSRLGRDLRKTLILDNSPASYIFHPENAVPVQSWFDDMADTELLNLIPIFEELSGAEDVYTSLGQLRAP</sequence>
<gene>
    <name type="primary">CTDSP2</name>
    <name type="synonym">NIF2</name>
    <name type="synonym">OS4</name>
    <name type="synonym">SCP2</name>
</gene>
<name>CTDS2_HUMAN</name>